<comment type="function">
    <text evidence="1">Catalyzes the isomerization of L-ribulose 5-phosphate to D-xylulose 5-phosphate. Is involved in the anaerobic L-ascorbate utilization.</text>
</comment>
<comment type="catalytic activity">
    <reaction evidence="1">
        <text>L-ribulose 5-phosphate = D-xylulose 5-phosphate</text>
        <dbReference type="Rhea" id="RHEA:22368"/>
        <dbReference type="ChEBI" id="CHEBI:57737"/>
        <dbReference type="ChEBI" id="CHEBI:58226"/>
        <dbReference type="EC" id="5.1.3.4"/>
    </reaction>
</comment>
<comment type="cofactor">
    <cofactor evidence="1">
        <name>Zn(2+)</name>
        <dbReference type="ChEBI" id="CHEBI:29105"/>
    </cofactor>
    <text evidence="1">Binds 1 zinc ion per subunit.</text>
</comment>
<comment type="pathway">
    <text evidence="1">Cofactor degradation; L-ascorbate degradation; D-xylulose 5-phosphate from L-ascorbate: step 4/4.</text>
</comment>
<comment type="induction">
    <text evidence="1">Induced by L-ascorbate. Repressed by UlaR.</text>
</comment>
<comment type="similarity">
    <text evidence="1">Belongs to the aldolase class II family. AraD/FucA subfamily.</text>
</comment>
<protein>
    <recommendedName>
        <fullName evidence="1">L-ribulose-5-phosphate 4-epimerase UlaF</fullName>
        <ecNumber evidence="1">5.1.3.4</ecNumber>
    </recommendedName>
    <alternativeName>
        <fullName evidence="1">L-ascorbate utilization protein F</fullName>
    </alternativeName>
    <alternativeName>
        <fullName evidence="1">Phosphoribulose isomerase</fullName>
    </alternativeName>
</protein>
<gene>
    <name evidence="1" type="primary">ulaF</name>
    <name type="ordered locus">STY4744</name>
    <name type="ordered locus">t4439</name>
</gene>
<feature type="chain" id="PRO_0000233246" description="L-ribulose-5-phosphate 4-epimerase UlaF">
    <location>
        <begin position="1"/>
        <end position="228"/>
    </location>
</feature>
<feature type="active site" description="Proton donor/acceptor" evidence="1">
    <location>
        <position position="118"/>
    </location>
</feature>
<feature type="active site" description="Proton donor/acceptor" evidence="1">
    <location>
        <position position="225"/>
    </location>
</feature>
<feature type="binding site" evidence="1">
    <location>
        <begin position="26"/>
        <end position="27"/>
    </location>
    <ligand>
        <name>substrate</name>
    </ligand>
</feature>
<feature type="binding site" evidence="1">
    <location>
        <begin position="43"/>
        <end position="44"/>
    </location>
    <ligand>
        <name>substrate</name>
    </ligand>
</feature>
<feature type="binding site" evidence="1">
    <location>
        <begin position="72"/>
        <end position="73"/>
    </location>
    <ligand>
        <name>substrate</name>
    </ligand>
</feature>
<feature type="binding site" evidence="1">
    <location>
        <position position="74"/>
    </location>
    <ligand>
        <name>Zn(2+)</name>
        <dbReference type="ChEBI" id="CHEBI:29105"/>
    </ligand>
</feature>
<feature type="binding site" evidence="1">
    <location>
        <position position="93"/>
    </location>
    <ligand>
        <name>Zn(2+)</name>
        <dbReference type="ChEBI" id="CHEBI:29105"/>
    </ligand>
</feature>
<feature type="binding site" evidence="1">
    <location>
        <position position="95"/>
    </location>
    <ligand>
        <name>Zn(2+)</name>
        <dbReference type="ChEBI" id="CHEBI:29105"/>
    </ligand>
</feature>
<feature type="binding site" evidence="1">
    <location>
        <position position="167"/>
    </location>
    <ligand>
        <name>Zn(2+)</name>
        <dbReference type="ChEBI" id="CHEBI:29105"/>
    </ligand>
</feature>
<dbReference type="EC" id="5.1.3.4" evidence="1"/>
<dbReference type="EMBL" id="AL513382">
    <property type="protein sequence ID" value="CAD06865.1"/>
    <property type="molecule type" value="Genomic_DNA"/>
</dbReference>
<dbReference type="EMBL" id="AE014613">
    <property type="protein sequence ID" value="AAO71886.1"/>
    <property type="molecule type" value="Genomic_DNA"/>
</dbReference>
<dbReference type="RefSeq" id="NP_458822.1">
    <property type="nucleotide sequence ID" value="NC_003198.1"/>
</dbReference>
<dbReference type="RefSeq" id="WP_001170772.1">
    <property type="nucleotide sequence ID" value="NZ_WSUR01000012.1"/>
</dbReference>
<dbReference type="SMR" id="Q8Z167"/>
<dbReference type="STRING" id="220341.gene:17588565"/>
<dbReference type="KEGG" id="stt:t4439"/>
<dbReference type="KEGG" id="sty:STY4744"/>
<dbReference type="PATRIC" id="fig|220341.7.peg.4845"/>
<dbReference type="eggNOG" id="COG0235">
    <property type="taxonomic scope" value="Bacteria"/>
</dbReference>
<dbReference type="HOGENOM" id="CLU_006033_5_0_6"/>
<dbReference type="OMA" id="WLMNKHF"/>
<dbReference type="OrthoDB" id="9786287at2"/>
<dbReference type="UniPathway" id="UPA00263">
    <property type="reaction ID" value="UER00380"/>
</dbReference>
<dbReference type="Proteomes" id="UP000000541">
    <property type="component" value="Chromosome"/>
</dbReference>
<dbReference type="Proteomes" id="UP000002670">
    <property type="component" value="Chromosome"/>
</dbReference>
<dbReference type="GO" id="GO:0005829">
    <property type="term" value="C:cytosol"/>
    <property type="evidence" value="ECO:0007669"/>
    <property type="project" value="TreeGrafter"/>
</dbReference>
<dbReference type="GO" id="GO:0016832">
    <property type="term" value="F:aldehyde-lyase activity"/>
    <property type="evidence" value="ECO:0007669"/>
    <property type="project" value="TreeGrafter"/>
</dbReference>
<dbReference type="GO" id="GO:0008742">
    <property type="term" value="F:L-ribulose-phosphate 4-epimerase activity"/>
    <property type="evidence" value="ECO:0007669"/>
    <property type="project" value="UniProtKB-UniRule"/>
</dbReference>
<dbReference type="GO" id="GO:0008270">
    <property type="term" value="F:zinc ion binding"/>
    <property type="evidence" value="ECO:0007669"/>
    <property type="project" value="UniProtKB-UniRule"/>
</dbReference>
<dbReference type="GO" id="GO:0019854">
    <property type="term" value="P:L-ascorbic acid catabolic process"/>
    <property type="evidence" value="ECO:0007669"/>
    <property type="project" value="UniProtKB-UniRule"/>
</dbReference>
<dbReference type="GO" id="GO:0019323">
    <property type="term" value="P:pentose catabolic process"/>
    <property type="evidence" value="ECO:0007669"/>
    <property type="project" value="TreeGrafter"/>
</dbReference>
<dbReference type="CDD" id="cd00398">
    <property type="entry name" value="Aldolase_II"/>
    <property type="match status" value="1"/>
</dbReference>
<dbReference type="FunFam" id="3.40.225.10:FF:000001">
    <property type="entry name" value="L-ribulose-5-phosphate 4-epimerase UlaF"/>
    <property type="match status" value="1"/>
</dbReference>
<dbReference type="Gene3D" id="3.40.225.10">
    <property type="entry name" value="Class II aldolase/adducin N-terminal domain"/>
    <property type="match status" value="1"/>
</dbReference>
<dbReference type="HAMAP" id="MF_01952">
    <property type="entry name" value="UlaF"/>
    <property type="match status" value="1"/>
</dbReference>
<dbReference type="InterPro" id="IPR050197">
    <property type="entry name" value="Aldolase_class_II_sugar_metab"/>
</dbReference>
<dbReference type="InterPro" id="IPR001303">
    <property type="entry name" value="Aldolase_II/adducin_N"/>
</dbReference>
<dbReference type="InterPro" id="IPR036409">
    <property type="entry name" value="Aldolase_II/adducin_N_sf"/>
</dbReference>
<dbReference type="InterPro" id="IPR023499">
    <property type="entry name" value="UlaF"/>
</dbReference>
<dbReference type="NCBIfam" id="NF006047">
    <property type="entry name" value="PRK08193.1"/>
    <property type="match status" value="1"/>
</dbReference>
<dbReference type="NCBIfam" id="NF009003">
    <property type="entry name" value="PRK12348.1"/>
    <property type="match status" value="1"/>
</dbReference>
<dbReference type="PANTHER" id="PTHR22789">
    <property type="entry name" value="FUCULOSE PHOSPHATE ALDOLASE"/>
    <property type="match status" value="1"/>
</dbReference>
<dbReference type="PANTHER" id="PTHR22789:SF9">
    <property type="entry name" value="L-RIBULOSE-5-PHOSPHATE 4-EPIMERASE ULAF"/>
    <property type="match status" value="1"/>
</dbReference>
<dbReference type="Pfam" id="PF00596">
    <property type="entry name" value="Aldolase_II"/>
    <property type="match status" value="1"/>
</dbReference>
<dbReference type="SMART" id="SM01007">
    <property type="entry name" value="Aldolase_II"/>
    <property type="match status" value="1"/>
</dbReference>
<dbReference type="SUPFAM" id="SSF53639">
    <property type="entry name" value="AraD/HMP-PK domain-like"/>
    <property type="match status" value="1"/>
</dbReference>
<sequence>MQKLKQQVFDANMDLPRYGLVTFTWGNVSAIDRERGLVVIKPSGVAYETMKVDDMVVVDMDGKVVEGRYRPSSDTATHLALYQRYPSLGGVVHTHSTHATAWAQAGMAIPALGTTHADYFFGDIPCTRALSEEEVQGEYELNTGKVIIETLGEVEPLHTPGIVVYQHGPFAWGKDAHDAVHNAVVMEEVARMAWIARGINPGLNPIDDYLMNKHFMRKHGPNAYYGQK</sequence>
<reference key="1">
    <citation type="journal article" date="2001" name="Nature">
        <title>Complete genome sequence of a multiple drug resistant Salmonella enterica serovar Typhi CT18.</title>
        <authorList>
            <person name="Parkhill J."/>
            <person name="Dougan G."/>
            <person name="James K.D."/>
            <person name="Thomson N.R."/>
            <person name="Pickard D."/>
            <person name="Wain J."/>
            <person name="Churcher C.M."/>
            <person name="Mungall K.L."/>
            <person name="Bentley S.D."/>
            <person name="Holden M.T.G."/>
            <person name="Sebaihia M."/>
            <person name="Baker S."/>
            <person name="Basham D."/>
            <person name="Brooks K."/>
            <person name="Chillingworth T."/>
            <person name="Connerton P."/>
            <person name="Cronin A."/>
            <person name="Davis P."/>
            <person name="Davies R.M."/>
            <person name="Dowd L."/>
            <person name="White N."/>
            <person name="Farrar J."/>
            <person name="Feltwell T."/>
            <person name="Hamlin N."/>
            <person name="Haque A."/>
            <person name="Hien T.T."/>
            <person name="Holroyd S."/>
            <person name="Jagels K."/>
            <person name="Krogh A."/>
            <person name="Larsen T.S."/>
            <person name="Leather S."/>
            <person name="Moule S."/>
            <person name="O'Gaora P."/>
            <person name="Parry C."/>
            <person name="Quail M.A."/>
            <person name="Rutherford K.M."/>
            <person name="Simmonds M."/>
            <person name="Skelton J."/>
            <person name="Stevens K."/>
            <person name="Whitehead S."/>
            <person name="Barrell B.G."/>
        </authorList>
    </citation>
    <scope>NUCLEOTIDE SEQUENCE [LARGE SCALE GENOMIC DNA]</scope>
    <source>
        <strain>CT18</strain>
    </source>
</reference>
<reference key="2">
    <citation type="journal article" date="2003" name="J. Bacteriol.">
        <title>Comparative genomics of Salmonella enterica serovar Typhi strains Ty2 and CT18.</title>
        <authorList>
            <person name="Deng W."/>
            <person name="Liou S.-R."/>
            <person name="Plunkett G. III"/>
            <person name="Mayhew G.F."/>
            <person name="Rose D.J."/>
            <person name="Burland V."/>
            <person name="Kodoyianni V."/>
            <person name="Schwartz D.C."/>
            <person name="Blattner F.R."/>
        </authorList>
    </citation>
    <scope>NUCLEOTIDE SEQUENCE [LARGE SCALE GENOMIC DNA]</scope>
    <source>
        <strain>ATCC 700931 / Ty2</strain>
    </source>
</reference>
<name>ULAF_SALTI</name>
<accession>Q8Z167</accession>
<accession>Q7C542</accession>
<organism>
    <name type="scientific">Salmonella typhi</name>
    <dbReference type="NCBI Taxonomy" id="90370"/>
    <lineage>
        <taxon>Bacteria</taxon>
        <taxon>Pseudomonadati</taxon>
        <taxon>Pseudomonadota</taxon>
        <taxon>Gammaproteobacteria</taxon>
        <taxon>Enterobacterales</taxon>
        <taxon>Enterobacteriaceae</taxon>
        <taxon>Salmonella</taxon>
    </lineage>
</organism>
<evidence type="ECO:0000255" key="1">
    <source>
        <dbReference type="HAMAP-Rule" id="MF_01952"/>
    </source>
</evidence>
<proteinExistence type="inferred from homology"/>
<keyword id="KW-0119">Carbohydrate metabolism</keyword>
<keyword id="KW-0413">Isomerase</keyword>
<keyword id="KW-0479">Metal-binding</keyword>
<keyword id="KW-0862">Zinc</keyword>